<protein>
    <recommendedName>
        <fullName evidence="1">Nucleotide-binding protein Bphyt_0592</fullName>
    </recommendedName>
</protein>
<organism>
    <name type="scientific">Paraburkholderia phytofirmans (strain DSM 17436 / LMG 22146 / PsJN)</name>
    <name type="common">Burkholderia phytofirmans</name>
    <dbReference type="NCBI Taxonomy" id="398527"/>
    <lineage>
        <taxon>Bacteria</taxon>
        <taxon>Pseudomonadati</taxon>
        <taxon>Pseudomonadota</taxon>
        <taxon>Betaproteobacteria</taxon>
        <taxon>Burkholderiales</taxon>
        <taxon>Burkholderiaceae</taxon>
        <taxon>Paraburkholderia</taxon>
    </lineage>
</organism>
<keyword id="KW-0067">ATP-binding</keyword>
<keyword id="KW-0342">GTP-binding</keyword>
<keyword id="KW-0547">Nucleotide-binding</keyword>
<dbReference type="EMBL" id="CP001052">
    <property type="protein sequence ID" value="ACD15017.1"/>
    <property type="molecule type" value="Genomic_DNA"/>
</dbReference>
<dbReference type="RefSeq" id="WP_012431655.1">
    <property type="nucleotide sequence ID" value="NC_010681.1"/>
</dbReference>
<dbReference type="SMR" id="B2SXH2"/>
<dbReference type="STRING" id="398527.Bphyt_0592"/>
<dbReference type="KEGG" id="bpy:Bphyt_0592"/>
<dbReference type="eggNOG" id="COG1660">
    <property type="taxonomic scope" value="Bacteria"/>
</dbReference>
<dbReference type="HOGENOM" id="CLU_059558_1_1_4"/>
<dbReference type="OrthoDB" id="9784461at2"/>
<dbReference type="Proteomes" id="UP000001739">
    <property type="component" value="Chromosome 1"/>
</dbReference>
<dbReference type="GO" id="GO:0005524">
    <property type="term" value="F:ATP binding"/>
    <property type="evidence" value="ECO:0007669"/>
    <property type="project" value="UniProtKB-UniRule"/>
</dbReference>
<dbReference type="GO" id="GO:0005525">
    <property type="term" value="F:GTP binding"/>
    <property type="evidence" value="ECO:0007669"/>
    <property type="project" value="UniProtKB-UniRule"/>
</dbReference>
<dbReference type="Gene3D" id="3.40.50.300">
    <property type="entry name" value="P-loop containing nucleotide triphosphate hydrolases"/>
    <property type="match status" value="1"/>
</dbReference>
<dbReference type="HAMAP" id="MF_00636">
    <property type="entry name" value="RapZ_like"/>
    <property type="match status" value="1"/>
</dbReference>
<dbReference type="InterPro" id="IPR027417">
    <property type="entry name" value="P-loop_NTPase"/>
</dbReference>
<dbReference type="InterPro" id="IPR005337">
    <property type="entry name" value="RapZ-like"/>
</dbReference>
<dbReference type="InterPro" id="IPR053930">
    <property type="entry name" value="RapZ-like_N"/>
</dbReference>
<dbReference type="InterPro" id="IPR053931">
    <property type="entry name" value="RapZ_C"/>
</dbReference>
<dbReference type="NCBIfam" id="NF003828">
    <property type="entry name" value="PRK05416.1"/>
    <property type="match status" value="1"/>
</dbReference>
<dbReference type="PANTHER" id="PTHR30448">
    <property type="entry name" value="RNASE ADAPTER PROTEIN RAPZ"/>
    <property type="match status" value="1"/>
</dbReference>
<dbReference type="PANTHER" id="PTHR30448:SF0">
    <property type="entry name" value="RNASE ADAPTER PROTEIN RAPZ"/>
    <property type="match status" value="1"/>
</dbReference>
<dbReference type="Pfam" id="PF22740">
    <property type="entry name" value="PapZ_C"/>
    <property type="match status" value="1"/>
</dbReference>
<dbReference type="Pfam" id="PF03668">
    <property type="entry name" value="RapZ-like_N"/>
    <property type="match status" value="1"/>
</dbReference>
<dbReference type="PIRSF" id="PIRSF005052">
    <property type="entry name" value="P-loopkin"/>
    <property type="match status" value="1"/>
</dbReference>
<dbReference type="SUPFAM" id="SSF52540">
    <property type="entry name" value="P-loop containing nucleoside triphosphate hydrolases"/>
    <property type="match status" value="1"/>
</dbReference>
<reference key="1">
    <citation type="journal article" date="2011" name="J. Bacteriol.">
        <title>Complete genome sequence of the plant growth-promoting endophyte Burkholderia phytofirmans strain PsJN.</title>
        <authorList>
            <person name="Weilharter A."/>
            <person name="Mitter B."/>
            <person name="Shin M.V."/>
            <person name="Chain P.S."/>
            <person name="Nowak J."/>
            <person name="Sessitsch A."/>
        </authorList>
    </citation>
    <scope>NUCLEOTIDE SEQUENCE [LARGE SCALE GENOMIC DNA]</scope>
    <source>
        <strain>DSM 17436 / LMG 22146 / PsJN</strain>
    </source>
</reference>
<comment type="function">
    <text evidence="1">Displays ATPase and GTPase activities.</text>
</comment>
<comment type="similarity">
    <text evidence="1">Belongs to the RapZ-like family.</text>
</comment>
<accession>B2SXH2</accession>
<evidence type="ECO:0000255" key="1">
    <source>
        <dbReference type="HAMAP-Rule" id="MF_00636"/>
    </source>
</evidence>
<gene>
    <name type="ordered locus">Bphyt_0592</name>
</gene>
<name>Y592_PARPJ</name>
<feature type="chain" id="PRO_1000130739" description="Nucleotide-binding protein Bphyt_0592">
    <location>
        <begin position="1"/>
        <end position="297"/>
    </location>
</feature>
<feature type="binding site" evidence="1">
    <location>
        <begin position="8"/>
        <end position="15"/>
    </location>
    <ligand>
        <name>ATP</name>
        <dbReference type="ChEBI" id="CHEBI:30616"/>
    </ligand>
</feature>
<feature type="binding site" evidence="1">
    <location>
        <begin position="57"/>
        <end position="60"/>
    </location>
    <ligand>
        <name>GTP</name>
        <dbReference type="ChEBI" id="CHEBI:37565"/>
    </ligand>
</feature>
<sequence>MRIILITGISGSGKSVALNALEDAGYYCVDNLPPRFLPQLASYLAEDGQDRLAVAIDARSSASLDEMPAMIRDLSRAHDVRVLFLNASTQSLIQRFSETRRRHPLSGSTSHDADVGLLTSLAEAIERERELVAGLAEFGHQIDTSNLRANVLRAWVKRFIEQKDSGLVLMFESFGFKRGVPLDADFVFDVRTLPNPYYDHELRPLTGLDKPVIDFLDALPVVHEMIHDIEKFLVKWLPHFRDDNRSYLTVAIGCTGGQHRSVFIAETLAARLASSANVIVRHRDAPVEAGESSKLVA</sequence>
<proteinExistence type="inferred from homology"/>